<accession>P12459</accession>
<comment type="function">
    <text>Tubulin is the major constituent of microtubules, a cylinder consisting of laterally associated linear protofilaments composed of alpha- and beta-tubulin heterodimers. Microtubules grow by the addition of GTP-tubulin dimers to the microtubule end, where a stabilizing cap forms. Below the cap, tubulin dimers are in GDP-bound state, owing to GTPase activity of alpha-tubulin.</text>
</comment>
<comment type="cofactor">
    <cofactor evidence="1">
        <name>Mg(2+)</name>
        <dbReference type="ChEBI" id="CHEBI:18420"/>
    </cofactor>
</comment>
<comment type="subunit">
    <text>Dimer of alpha and beta chains. A typical microtubule is a hollow water-filled tube with an outer diameter of 25 nm and an inner diameter of 15 nM. Alpha-beta heterodimers associate head-to-tail to form protofilaments running lengthwise along the microtubule wall with the beta-tubulin subunit facing the microtubule plus end conferring a structural polarity. Microtubules usually have 13 protofilaments but different protofilament numbers can be found in some organisms and specialized cells.</text>
</comment>
<comment type="subcellular location">
    <subcellularLocation>
        <location>Cytoplasm</location>
        <location>Cytoskeleton</location>
    </subcellularLocation>
</comment>
<comment type="similarity">
    <text evidence="3">Belongs to the tubulin family.</text>
</comment>
<dbReference type="EMBL" id="M21296">
    <property type="protein sequence ID" value="AAA34009.1"/>
    <property type="molecule type" value="Genomic_DNA"/>
</dbReference>
<dbReference type="PIR" id="JA0048">
    <property type="entry name" value="JA0048"/>
</dbReference>
<dbReference type="SMR" id="P12459"/>
<dbReference type="STRING" id="3847.P12459"/>
<dbReference type="PaxDb" id="3847-GLYMA08G01740.1"/>
<dbReference type="ProMEX" id="P12459"/>
<dbReference type="eggNOG" id="KOG1375">
    <property type="taxonomic scope" value="Eukaryota"/>
</dbReference>
<dbReference type="InParanoid" id="P12459"/>
<dbReference type="Proteomes" id="UP000008827">
    <property type="component" value="Unplaced"/>
</dbReference>
<dbReference type="GO" id="GO:0005737">
    <property type="term" value="C:cytoplasm"/>
    <property type="evidence" value="ECO:0000318"/>
    <property type="project" value="GO_Central"/>
</dbReference>
<dbReference type="GO" id="GO:0005874">
    <property type="term" value="C:microtubule"/>
    <property type="evidence" value="ECO:0000318"/>
    <property type="project" value="GO_Central"/>
</dbReference>
<dbReference type="GO" id="GO:0005525">
    <property type="term" value="F:GTP binding"/>
    <property type="evidence" value="ECO:0000318"/>
    <property type="project" value="GO_Central"/>
</dbReference>
<dbReference type="GO" id="GO:0003924">
    <property type="term" value="F:GTPase activity"/>
    <property type="evidence" value="ECO:0007669"/>
    <property type="project" value="InterPro"/>
</dbReference>
<dbReference type="GO" id="GO:0046872">
    <property type="term" value="F:metal ion binding"/>
    <property type="evidence" value="ECO:0007669"/>
    <property type="project" value="UniProtKB-KW"/>
</dbReference>
<dbReference type="GO" id="GO:0005200">
    <property type="term" value="F:structural constituent of cytoskeleton"/>
    <property type="evidence" value="ECO:0000318"/>
    <property type="project" value="GO_Central"/>
</dbReference>
<dbReference type="GO" id="GO:0000226">
    <property type="term" value="P:microtubule cytoskeleton organization"/>
    <property type="evidence" value="ECO:0000318"/>
    <property type="project" value="GO_Central"/>
</dbReference>
<dbReference type="GO" id="GO:0000278">
    <property type="term" value="P:mitotic cell cycle"/>
    <property type="evidence" value="ECO:0000318"/>
    <property type="project" value="GO_Central"/>
</dbReference>
<dbReference type="CDD" id="cd02187">
    <property type="entry name" value="beta_tubulin"/>
    <property type="match status" value="1"/>
</dbReference>
<dbReference type="FunFam" id="1.10.287.600:FF:000002">
    <property type="entry name" value="Tubulin beta chain"/>
    <property type="match status" value="1"/>
</dbReference>
<dbReference type="FunFam" id="3.30.1330.20:FF:000002">
    <property type="entry name" value="Tubulin beta chain"/>
    <property type="match status" value="1"/>
</dbReference>
<dbReference type="FunFam" id="3.40.50.1440:FF:000005">
    <property type="entry name" value="Tubulin beta chain"/>
    <property type="match status" value="1"/>
</dbReference>
<dbReference type="Gene3D" id="1.10.287.600">
    <property type="entry name" value="Helix hairpin bin"/>
    <property type="match status" value="1"/>
</dbReference>
<dbReference type="Gene3D" id="3.30.1330.20">
    <property type="entry name" value="Tubulin/FtsZ, C-terminal domain"/>
    <property type="match status" value="1"/>
</dbReference>
<dbReference type="Gene3D" id="3.40.50.1440">
    <property type="entry name" value="Tubulin/FtsZ, GTPase domain"/>
    <property type="match status" value="1"/>
</dbReference>
<dbReference type="InterPro" id="IPR013838">
    <property type="entry name" value="Beta-tubulin_BS"/>
</dbReference>
<dbReference type="InterPro" id="IPR002453">
    <property type="entry name" value="Beta_tubulin"/>
</dbReference>
<dbReference type="InterPro" id="IPR008280">
    <property type="entry name" value="Tub_FtsZ_C"/>
</dbReference>
<dbReference type="InterPro" id="IPR000217">
    <property type="entry name" value="Tubulin"/>
</dbReference>
<dbReference type="InterPro" id="IPR037103">
    <property type="entry name" value="Tubulin/FtsZ-like_C"/>
</dbReference>
<dbReference type="InterPro" id="IPR018316">
    <property type="entry name" value="Tubulin/FtsZ_2-layer-sand-dom"/>
</dbReference>
<dbReference type="InterPro" id="IPR036525">
    <property type="entry name" value="Tubulin/FtsZ_GTPase_sf"/>
</dbReference>
<dbReference type="InterPro" id="IPR023123">
    <property type="entry name" value="Tubulin_C"/>
</dbReference>
<dbReference type="InterPro" id="IPR017975">
    <property type="entry name" value="Tubulin_CS"/>
</dbReference>
<dbReference type="InterPro" id="IPR003008">
    <property type="entry name" value="Tubulin_FtsZ_GTPase"/>
</dbReference>
<dbReference type="PANTHER" id="PTHR11588">
    <property type="entry name" value="TUBULIN"/>
    <property type="match status" value="1"/>
</dbReference>
<dbReference type="Pfam" id="PF00091">
    <property type="entry name" value="Tubulin"/>
    <property type="match status" value="1"/>
</dbReference>
<dbReference type="Pfam" id="PF03953">
    <property type="entry name" value="Tubulin_C"/>
    <property type="match status" value="1"/>
</dbReference>
<dbReference type="PRINTS" id="PR01163">
    <property type="entry name" value="BETATUBULIN"/>
</dbReference>
<dbReference type="PRINTS" id="PR01161">
    <property type="entry name" value="TUBULIN"/>
</dbReference>
<dbReference type="SMART" id="SM00864">
    <property type="entry name" value="Tubulin"/>
    <property type="match status" value="1"/>
</dbReference>
<dbReference type="SMART" id="SM00865">
    <property type="entry name" value="Tubulin_C"/>
    <property type="match status" value="1"/>
</dbReference>
<dbReference type="SUPFAM" id="SSF55307">
    <property type="entry name" value="Tubulin C-terminal domain-like"/>
    <property type="match status" value="1"/>
</dbReference>
<dbReference type="SUPFAM" id="SSF52490">
    <property type="entry name" value="Tubulin nucleotide-binding domain-like"/>
    <property type="match status" value="1"/>
</dbReference>
<dbReference type="PROSITE" id="PS00227">
    <property type="entry name" value="TUBULIN"/>
    <property type="match status" value="1"/>
</dbReference>
<dbReference type="PROSITE" id="PS00228">
    <property type="entry name" value="TUBULIN_B_AUTOREG"/>
    <property type="match status" value="1"/>
</dbReference>
<protein>
    <recommendedName>
        <fullName>Tubulin beta-1 chain</fullName>
    </recommendedName>
    <alternativeName>
        <fullName>Beta-1-tubulin</fullName>
    </alternativeName>
</protein>
<evidence type="ECO:0000250" key="1">
    <source>
        <dbReference type="UniProtKB" id="P68363"/>
    </source>
</evidence>
<evidence type="ECO:0000250" key="2">
    <source>
        <dbReference type="UniProtKB" id="Q13509"/>
    </source>
</evidence>
<evidence type="ECO:0000305" key="3"/>
<organism>
    <name type="scientific">Glycine max</name>
    <name type="common">Soybean</name>
    <name type="synonym">Glycine hispida</name>
    <dbReference type="NCBI Taxonomy" id="3847"/>
    <lineage>
        <taxon>Eukaryota</taxon>
        <taxon>Viridiplantae</taxon>
        <taxon>Streptophyta</taxon>
        <taxon>Embryophyta</taxon>
        <taxon>Tracheophyta</taxon>
        <taxon>Spermatophyta</taxon>
        <taxon>Magnoliopsida</taxon>
        <taxon>eudicotyledons</taxon>
        <taxon>Gunneridae</taxon>
        <taxon>Pentapetalae</taxon>
        <taxon>rosids</taxon>
        <taxon>fabids</taxon>
        <taxon>Fabales</taxon>
        <taxon>Fabaceae</taxon>
        <taxon>Papilionoideae</taxon>
        <taxon>50 kb inversion clade</taxon>
        <taxon>NPAAA clade</taxon>
        <taxon>indigoferoid/millettioid clade</taxon>
        <taxon>Phaseoleae</taxon>
        <taxon>Glycine</taxon>
        <taxon>Glycine subgen. Soja</taxon>
    </lineage>
</organism>
<reference key="1">
    <citation type="journal article" date="1987" name="Plant Mol. Biol.">
        <title>The isolation, characterization and sequence of two divergent beta-tubulin genes from soybean (Glycine max L.).</title>
        <authorList>
            <person name="Guiltinan M.J."/>
            <person name="Ma D.-P."/>
            <person name="Barker R.F."/>
            <person name="Bustos M.M."/>
            <person name="Cyr R.J."/>
            <person name="Yadegari R."/>
            <person name="Fosket D.E."/>
        </authorList>
        <dbReference type="AGRICOLA" id="IND92001189"/>
    </citation>
    <scope>NUCLEOTIDE SEQUENCE [GENOMIC DNA]</scope>
</reference>
<name>TBB1_SOYBN</name>
<sequence length="445" mass="49991">MREILHVQAGQCGNQIGGKFWEVMCDEHGIDATGNYVGNFHLQLERVNVYYNEASGGRYVPRAVLMDLEPGTMDSLRSGPFGKIFRPDNFVFGQNGAGNNWAKGHYTEGAELIDSVLDVVRKEAENCDCLQGFQICHSLGGGTGSGMGTLLISKIREEYPDRMMLTFSVFAVPEGSDTVVEPYNATLSVHQLVENADECMVLDNEALYDICFRTLKLTNPSFGDLNHLISTTMSGVTCCLRFPGQLNSDLRKLAVNLIPFPRLHFFMVGFAPLTSRGSQQYRSLTIPELTQQMWDARNMMCAADPRHGRYLTASAMFRGKMSTKEVDQQMINVQNKNSSYFVEWIPNNVKSSVCDIPPTGLSMSSTFMGNSTSIQEMFRRVSEQFTVMFKRKAFLHWYTGEGMDEMEFTEVRANMNDLVAEYQQYQDATAVDDHEDEDEDEAMAA</sequence>
<feature type="chain" id="PRO_0000048381" description="Tubulin beta-1 chain">
    <location>
        <begin position="1"/>
        <end position="445"/>
    </location>
</feature>
<feature type="binding site" evidence="2">
    <location>
        <position position="11"/>
    </location>
    <ligand>
        <name>GTP</name>
        <dbReference type="ChEBI" id="CHEBI:37565"/>
    </ligand>
</feature>
<feature type="binding site" evidence="1">
    <location>
        <position position="69"/>
    </location>
    <ligand>
        <name>GTP</name>
        <dbReference type="ChEBI" id="CHEBI:37565"/>
    </ligand>
</feature>
<feature type="binding site" evidence="1">
    <location>
        <position position="69"/>
    </location>
    <ligand>
        <name>Mg(2+)</name>
        <dbReference type="ChEBI" id="CHEBI:18420"/>
    </ligand>
</feature>
<feature type="binding site" evidence="2">
    <location>
        <position position="138"/>
    </location>
    <ligand>
        <name>GTP</name>
        <dbReference type="ChEBI" id="CHEBI:37565"/>
    </ligand>
</feature>
<feature type="binding site" evidence="2">
    <location>
        <position position="142"/>
    </location>
    <ligand>
        <name>GTP</name>
        <dbReference type="ChEBI" id="CHEBI:37565"/>
    </ligand>
</feature>
<feature type="binding site" evidence="2">
    <location>
        <position position="143"/>
    </location>
    <ligand>
        <name>GTP</name>
        <dbReference type="ChEBI" id="CHEBI:37565"/>
    </ligand>
</feature>
<feature type="binding site" evidence="2">
    <location>
        <position position="144"/>
    </location>
    <ligand>
        <name>GTP</name>
        <dbReference type="ChEBI" id="CHEBI:37565"/>
    </ligand>
</feature>
<feature type="binding site" evidence="2">
    <location>
        <position position="204"/>
    </location>
    <ligand>
        <name>GTP</name>
        <dbReference type="ChEBI" id="CHEBI:37565"/>
    </ligand>
</feature>
<feature type="binding site" evidence="2">
    <location>
        <position position="226"/>
    </location>
    <ligand>
        <name>GTP</name>
        <dbReference type="ChEBI" id="CHEBI:37565"/>
    </ligand>
</feature>
<keyword id="KW-0963">Cytoplasm</keyword>
<keyword id="KW-0206">Cytoskeleton</keyword>
<keyword id="KW-0342">GTP-binding</keyword>
<keyword id="KW-0460">Magnesium</keyword>
<keyword id="KW-0479">Metal-binding</keyword>
<keyword id="KW-0493">Microtubule</keyword>
<keyword id="KW-0547">Nucleotide-binding</keyword>
<keyword id="KW-1185">Reference proteome</keyword>
<proteinExistence type="inferred from homology"/>
<gene>
    <name type="primary">TUBB1</name>
</gene>